<proteinExistence type="evidence at protein level"/>
<protein>
    <recommendedName>
        <fullName>Ribonuclease UK114</fullName>
        <ecNumber>3.1.-.-</ecNumber>
    </recommendedName>
    <alternativeName>
        <fullName>Perchloric acid-soluble protein</fullName>
        <shortName>PSP</shortName>
    </alternativeName>
</protein>
<name>UK114_CHICK</name>
<accession>P83145</accession>
<reference evidence="3" key="1">
    <citation type="journal article" date="2001" name="Comp. Biochem. Physiol.">
        <title>Purification, characterization and developmental expression of chick (Gallus domesticus) liver PSP protein.</title>
        <authorList>
            <person name="Nordin H."/>
            <person name="Matsumoto M."/>
            <person name="Suzuki K."/>
            <person name="Kaneki K."/>
            <person name="Natori Y."/>
            <person name="Kishi K."/>
            <person name="Oka T."/>
        </authorList>
    </citation>
    <scope>PROTEIN SEQUENCE</scope>
    <scope>FUNCTION</scope>
    <scope>SUBUNIT</scope>
    <scope>SUBCELLULAR LOCATION</scope>
    <scope>TISSUE SPECIFICITY</scope>
    <scope>DEVELOPMENTAL STAGE</scope>
    <source>
        <strain>White leghorn</strain>
        <tissue>Liver</tissue>
    </source>
</reference>
<organism evidence="3">
    <name type="scientific">Gallus gallus</name>
    <name type="common">Chicken</name>
    <dbReference type="NCBI Taxonomy" id="9031"/>
    <lineage>
        <taxon>Eukaryota</taxon>
        <taxon>Metazoa</taxon>
        <taxon>Chordata</taxon>
        <taxon>Craniata</taxon>
        <taxon>Vertebrata</taxon>
        <taxon>Euteleostomi</taxon>
        <taxon>Archelosauria</taxon>
        <taxon>Archosauria</taxon>
        <taxon>Dinosauria</taxon>
        <taxon>Saurischia</taxon>
        <taxon>Theropoda</taxon>
        <taxon>Coelurosauria</taxon>
        <taxon>Aves</taxon>
        <taxon>Neognathae</taxon>
        <taxon>Galloanserae</taxon>
        <taxon>Galliformes</taxon>
        <taxon>Phasianidae</taxon>
        <taxon>Phasianinae</taxon>
        <taxon>Gallus</taxon>
    </lineage>
</organism>
<comment type="function">
    <text evidence="1">Endoribonuclease responsible for the inhibition of the translation by cleaving mRNA. Inhibits cell-free protein synthesis. Cleaves phosphodiester bonds only in single-stranded RNA.</text>
</comment>
<comment type="subunit">
    <text evidence="1">Monomer.</text>
</comment>
<comment type="subcellular location">
    <subcellularLocation>
        <location evidence="1">Cytoplasm</location>
    </subcellularLocation>
</comment>
<comment type="tissue specificity">
    <text evidence="1">Mainly expressed in the liver and kidney. Lower expression found in intestine, gizzard, glandular stomach, heart, brain and spleen.</text>
</comment>
<comment type="developmental stage">
    <text evidence="1">Expression depends on the cellular development of the chick liver.</text>
</comment>
<comment type="PTM">
    <text evidence="2">The N-terminus may be blocked.</text>
</comment>
<comment type="similarity">
    <text evidence="3">Belongs to the RutC family.</text>
</comment>
<dbReference type="EC" id="3.1.-.-"/>
<dbReference type="SMR" id="P83145"/>
<dbReference type="InParanoid" id="P83145"/>
<dbReference type="PhylomeDB" id="P83145"/>
<dbReference type="Proteomes" id="UP000000539">
    <property type="component" value="Unassembled WGS sequence"/>
</dbReference>
<dbReference type="GO" id="GO:0005737">
    <property type="term" value="C:cytoplasm"/>
    <property type="evidence" value="ECO:0000304"/>
    <property type="project" value="UniProtKB"/>
</dbReference>
<dbReference type="GO" id="GO:0004519">
    <property type="term" value="F:endonuclease activity"/>
    <property type="evidence" value="ECO:0007669"/>
    <property type="project" value="UniProtKB-KW"/>
</dbReference>
<dbReference type="GO" id="GO:0017148">
    <property type="term" value="P:negative regulation of translation"/>
    <property type="evidence" value="ECO:0000304"/>
    <property type="project" value="UniProtKB"/>
</dbReference>
<dbReference type="GO" id="GO:0001558">
    <property type="term" value="P:regulation of cell growth"/>
    <property type="evidence" value="ECO:0000304"/>
    <property type="project" value="UniProtKB"/>
</dbReference>
<dbReference type="CDD" id="cd00448">
    <property type="entry name" value="YjgF_YER057c_UK114_family"/>
    <property type="match status" value="1"/>
</dbReference>
<dbReference type="Gene3D" id="3.30.1330.40">
    <property type="entry name" value="RutC-like"/>
    <property type="match status" value="1"/>
</dbReference>
<dbReference type="InterPro" id="IPR035959">
    <property type="entry name" value="RutC-like_sf"/>
</dbReference>
<dbReference type="SUPFAM" id="SSF55298">
    <property type="entry name" value="YjgF-like"/>
    <property type="match status" value="1"/>
</dbReference>
<evidence type="ECO:0000269" key="1">
    <source>
    </source>
</evidence>
<evidence type="ECO:0000303" key="2">
    <source>
    </source>
</evidence>
<evidence type="ECO:0000305" key="3"/>
<sequence>TTVFLADIKSNCPSRVSFQVAALPGARVEIEAIAIQGPI</sequence>
<feature type="chain" id="PRO_0000170311" description="Ribonuclease UK114">
    <location>
        <begin position="1" status="less than"/>
        <end position="39" status="greater than"/>
    </location>
</feature>
<feature type="non-consecutive residues" evidence="3">
    <location>
        <begin position="9"/>
        <end position="10"/>
    </location>
</feature>
<feature type="non-consecutive residues" evidence="2">
    <location>
        <begin position="24"/>
        <end position="25"/>
    </location>
</feature>
<feature type="non-terminal residue" evidence="2">
    <location>
        <position position="1"/>
    </location>
</feature>
<feature type="non-terminal residue" evidence="2">
    <location>
        <position position="39"/>
    </location>
</feature>
<keyword id="KW-0963">Cytoplasm</keyword>
<keyword id="KW-0903">Direct protein sequencing</keyword>
<keyword id="KW-0255">Endonuclease</keyword>
<keyword id="KW-0378">Hydrolase</keyword>
<keyword id="KW-0540">Nuclease</keyword>
<keyword id="KW-1185">Reference proteome</keyword>